<protein>
    <recommendedName>
        <fullName>Epi-isozizaene synthase</fullName>
        <shortName>EIZS</shortName>
        <ecNumber>4.2.3.37</ecNumber>
    </recommendedName>
    <alternativeName>
        <fullName>Sesquiterpene cyclase</fullName>
    </alternativeName>
    <alternativeName>
        <fullName>Sesquiterpene synthase</fullName>
    </alternativeName>
</protein>
<proteinExistence type="evidence at protein level"/>
<name>CYC1_STRCO</name>
<dbReference type="EC" id="4.2.3.37"/>
<dbReference type="EMBL" id="AL939123">
    <property type="protein sequence ID" value="CAB94607.1"/>
    <property type="molecule type" value="Genomic_DNA"/>
</dbReference>
<dbReference type="RefSeq" id="NP_629369.1">
    <property type="nucleotide sequence ID" value="NC_003888.3"/>
</dbReference>
<dbReference type="RefSeq" id="WP_011030119.1">
    <property type="nucleotide sequence ID" value="NZ_VNID01000008.1"/>
</dbReference>
<dbReference type="PDB" id="3KB9">
    <property type="method" value="X-ray"/>
    <property type="resolution" value="1.60 A"/>
    <property type="chains" value="A=2-361"/>
</dbReference>
<dbReference type="PDB" id="3KBK">
    <property type="method" value="X-ray"/>
    <property type="resolution" value="1.90 A"/>
    <property type="chains" value="A=2-361"/>
</dbReference>
<dbReference type="PDB" id="3LG5">
    <property type="method" value="X-ray"/>
    <property type="resolution" value="1.64 A"/>
    <property type="chains" value="A=1-361"/>
</dbReference>
<dbReference type="PDB" id="3LGK">
    <property type="method" value="X-ray"/>
    <property type="resolution" value="1.89 A"/>
    <property type="chains" value="A=2-361"/>
</dbReference>
<dbReference type="PDB" id="4LTV">
    <property type="method" value="X-ray"/>
    <property type="resolution" value="2.40 A"/>
    <property type="chains" value="A=2-361"/>
</dbReference>
<dbReference type="PDB" id="4LTZ">
    <property type="method" value="X-ray"/>
    <property type="resolution" value="2.45 A"/>
    <property type="chains" value="A=2-361"/>
</dbReference>
<dbReference type="PDB" id="4LUU">
    <property type="method" value="X-ray"/>
    <property type="resolution" value="1.95 A"/>
    <property type="chains" value="A=2-361"/>
</dbReference>
<dbReference type="PDB" id="4LXW">
    <property type="method" value="X-ray"/>
    <property type="resolution" value="2.09 A"/>
    <property type="chains" value="A=2-361"/>
</dbReference>
<dbReference type="PDB" id="4LZ0">
    <property type="method" value="X-ray"/>
    <property type="resolution" value="1.75 A"/>
    <property type="chains" value="A=2-361"/>
</dbReference>
<dbReference type="PDB" id="4LZ3">
    <property type="method" value="X-ray"/>
    <property type="resolution" value="2.10 A"/>
    <property type="chains" value="A=2-361"/>
</dbReference>
<dbReference type="PDB" id="4LZC">
    <property type="method" value="X-ray"/>
    <property type="resolution" value="2.46 A"/>
    <property type="chains" value="A=2-361"/>
</dbReference>
<dbReference type="PDB" id="6AX9">
    <property type="method" value="X-ray"/>
    <property type="resolution" value="2.40 A"/>
    <property type="chains" value="A=2-361"/>
</dbReference>
<dbReference type="PDB" id="6AXM">
    <property type="method" value="X-ray"/>
    <property type="resolution" value="1.80 A"/>
    <property type="chains" value="A=2-361"/>
</dbReference>
<dbReference type="PDB" id="6AXN">
    <property type="method" value="X-ray"/>
    <property type="resolution" value="1.90 A"/>
    <property type="chains" value="A=2-361"/>
</dbReference>
<dbReference type="PDB" id="6AXO">
    <property type="method" value="X-ray"/>
    <property type="resolution" value="2.10 A"/>
    <property type="chains" value="A=2-361"/>
</dbReference>
<dbReference type="PDB" id="6AXU">
    <property type="method" value="X-ray"/>
    <property type="resolution" value="1.82 A"/>
    <property type="chains" value="A=2-361"/>
</dbReference>
<dbReference type="PDB" id="6OFV">
    <property type="method" value="X-ray"/>
    <property type="resolution" value="1.91 A"/>
    <property type="chains" value="A=1-361"/>
</dbReference>
<dbReference type="PDB" id="7KJ8">
    <property type="method" value="X-ray"/>
    <property type="resolution" value="1.90 A"/>
    <property type="chains" value="A=2-361"/>
</dbReference>
<dbReference type="PDB" id="7KJ9">
    <property type="method" value="X-ray"/>
    <property type="resolution" value="2.20 A"/>
    <property type="chains" value="A=2-361"/>
</dbReference>
<dbReference type="PDB" id="7KJD">
    <property type="method" value="X-ray"/>
    <property type="resolution" value="1.50 A"/>
    <property type="chains" value="A=2-361"/>
</dbReference>
<dbReference type="PDB" id="7KJE">
    <property type="method" value="X-ray"/>
    <property type="resolution" value="1.60 A"/>
    <property type="chains" value="A=2-361"/>
</dbReference>
<dbReference type="PDB" id="7KJF">
    <property type="method" value="X-ray"/>
    <property type="resolution" value="1.40 A"/>
    <property type="chains" value="A=2-361"/>
</dbReference>
<dbReference type="PDB" id="7KJG">
    <property type="method" value="X-ray"/>
    <property type="resolution" value="1.30 A"/>
    <property type="chains" value="A=2-361"/>
</dbReference>
<dbReference type="PDB" id="8SU0">
    <property type="method" value="X-ray"/>
    <property type="resolution" value="1.99 A"/>
    <property type="chains" value="A=2-361"/>
</dbReference>
<dbReference type="PDB" id="8SU1">
    <property type="method" value="X-ray"/>
    <property type="resolution" value="1.37 A"/>
    <property type="chains" value="A=2-361"/>
</dbReference>
<dbReference type="PDB" id="8SU2">
    <property type="method" value="X-ray"/>
    <property type="resolution" value="1.33 A"/>
    <property type="chains" value="A=2-361"/>
</dbReference>
<dbReference type="PDB" id="8SU3">
    <property type="method" value="X-ray"/>
    <property type="resolution" value="1.29 A"/>
    <property type="chains" value="A=2-361"/>
</dbReference>
<dbReference type="PDB" id="8SU4">
    <property type="method" value="X-ray"/>
    <property type="resolution" value="1.43 A"/>
    <property type="chains" value="A=2-361"/>
</dbReference>
<dbReference type="PDB" id="8SU5">
    <property type="method" value="X-ray"/>
    <property type="resolution" value="1.48 A"/>
    <property type="chains" value="A=2-361"/>
</dbReference>
<dbReference type="PDB" id="8V3K">
    <property type="method" value="X-ray"/>
    <property type="resolution" value="1.47 A"/>
    <property type="chains" value="A=2-361"/>
</dbReference>
<dbReference type="PDBsum" id="3KB9"/>
<dbReference type="PDBsum" id="3KBK"/>
<dbReference type="PDBsum" id="3LG5"/>
<dbReference type="PDBsum" id="3LGK"/>
<dbReference type="PDBsum" id="4LTV"/>
<dbReference type="PDBsum" id="4LTZ"/>
<dbReference type="PDBsum" id="4LUU"/>
<dbReference type="PDBsum" id="4LXW"/>
<dbReference type="PDBsum" id="4LZ0"/>
<dbReference type="PDBsum" id="4LZ3"/>
<dbReference type="PDBsum" id="4LZC"/>
<dbReference type="PDBsum" id="6AX9"/>
<dbReference type="PDBsum" id="6AXM"/>
<dbReference type="PDBsum" id="6AXN"/>
<dbReference type="PDBsum" id="6AXO"/>
<dbReference type="PDBsum" id="6AXU"/>
<dbReference type="PDBsum" id="6OFV"/>
<dbReference type="PDBsum" id="7KJ8"/>
<dbReference type="PDBsum" id="7KJ9"/>
<dbReference type="PDBsum" id="7KJD"/>
<dbReference type="PDBsum" id="7KJE"/>
<dbReference type="PDBsum" id="7KJF"/>
<dbReference type="PDBsum" id="7KJG"/>
<dbReference type="PDBsum" id="8SU0"/>
<dbReference type="PDBsum" id="8SU1"/>
<dbReference type="PDBsum" id="8SU2"/>
<dbReference type="PDBsum" id="8SU3"/>
<dbReference type="PDBsum" id="8SU4"/>
<dbReference type="PDBsum" id="8SU5"/>
<dbReference type="PDBsum" id="8V3K"/>
<dbReference type="SMR" id="Q9K499"/>
<dbReference type="STRING" id="100226.gene:17762873"/>
<dbReference type="PaxDb" id="100226-SCO5222"/>
<dbReference type="GeneID" id="91383803"/>
<dbReference type="KEGG" id="sco:SCO5222"/>
<dbReference type="PATRIC" id="fig|100226.15.peg.5306"/>
<dbReference type="eggNOG" id="ENOG5033S8Y">
    <property type="taxonomic scope" value="Bacteria"/>
</dbReference>
<dbReference type="HOGENOM" id="CLU_042538_4_1_11"/>
<dbReference type="InParanoid" id="Q9K499"/>
<dbReference type="OrthoDB" id="2989600at2"/>
<dbReference type="PhylomeDB" id="Q9K499"/>
<dbReference type="BioCyc" id="MetaCyc:MONOMER-13904"/>
<dbReference type="BRENDA" id="4.2.3.37">
    <property type="organism ID" value="5998"/>
</dbReference>
<dbReference type="SABIO-RK" id="Q9K499"/>
<dbReference type="UniPathway" id="UPA00195"/>
<dbReference type="EvolutionaryTrace" id="Q9K499"/>
<dbReference type="Proteomes" id="UP000001973">
    <property type="component" value="Chromosome"/>
</dbReference>
<dbReference type="GO" id="GO:0052680">
    <property type="term" value="F:epi-isozizaene synthase activity"/>
    <property type="evidence" value="ECO:0007669"/>
    <property type="project" value="UniProtKB-EC"/>
</dbReference>
<dbReference type="GO" id="GO:0046872">
    <property type="term" value="F:metal ion binding"/>
    <property type="evidence" value="ECO:0007669"/>
    <property type="project" value="UniProtKB-KW"/>
</dbReference>
<dbReference type="GO" id="GO:0010333">
    <property type="term" value="F:terpene synthase activity"/>
    <property type="evidence" value="ECO:0007669"/>
    <property type="project" value="InterPro"/>
</dbReference>
<dbReference type="CDD" id="cd00687">
    <property type="entry name" value="Terpene_cyclase_nonplant_C1"/>
    <property type="match status" value="1"/>
</dbReference>
<dbReference type="Gene3D" id="1.10.600.10">
    <property type="entry name" value="Farnesyl Diphosphate Synthase"/>
    <property type="match status" value="1"/>
</dbReference>
<dbReference type="InterPro" id="IPR008949">
    <property type="entry name" value="Isoprenoid_synthase_dom_sf"/>
</dbReference>
<dbReference type="InterPro" id="IPR054543">
    <property type="entry name" value="IsozizSyn"/>
</dbReference>
<dbReference type="InterPro" id="IPR034686">
    <property type="entry name" value="Terpene_cyclase-like_2"/>
</dbReference>
<dbReference type="NCBIfam" id="NF045483">
    <property type="entry name" value="IsozizSyn"/>
    <property type="match status" value="1"/>
</dbReference>
<dbReference type="PANTHER" id="PTHR35201:SF4">
    <property type="entry name" value="BETA-PINACENE SYNTHASE-RELATED"/>
    <property type="match status" value="1"/>
</dbReference>
<dbReference type="PANTHER" id="PTHR35201">
    <property type="entry name" value="TERPENE SYNTHASE"/>
    <property type="match status" value="1"/>
</dbReference>
<dbReference type="Pfam" id="PF19086">
    <property type="entry name" value="Terpene_syn_C_2"/>
    <property type="match status" value="1"/>
</dbReference>
<dbReference type="SFLD" id="SFLDS00005">
    <property type="entry name" value="Isoprenoid_Synthase_Type_I"/>
    <property type="match status" value="1"/>
</dbReference>
<dbReference type="SFLD" id="SFLDG01020">
    <property type="entry name" value="Terpene_Cyclase_Like_2"/>
    <property type="match status" value="1"/>
</dbReference>
<dbReference type="SUPFAM" id="SSF48576">
    <property type="entry name" value="Terpenoid synthases"/>
    <property type="match status" value="1"/>
</dbReference>
<keyword id="KW-0002">3D-structure</keyword>
<keyword id="KW-0456">Lyase</keyword>
<keyword id="KW-0460">Magnesium</keyword>
<keyword id="KW-0479">Metal-binding</keyword>
<keyword id="KW-1185">Reference proteome</keyword>
<sequence>MHAFPHGTTATPTAIAVPPSLRLPVIEAAFPRQLHPYWPKLQETTRTWLLEKRLMPADKVEEYADGLCYTDLMAGYYLGAPDEVLQAIADYSAWFFVWDDRHDRDIVHGRAGAWRRLRGLLHTALDSPGDHLHHEDTLVAGFADSVRRLYAFLPATWNARFARHFHTVIEAYDREFHNRTRGIVPGVEEYLELRRLTFAHWIWTDLLEPSSGCELPDAVRKHPAYRRAALLSQEFAAWYNDLCSLPKEIAGDEVHNLGISLITHHSLTLEEAIGEVRRRVEECITEFLAVERDALRFADELADGTVRGKELSGAVRANVGNMRNWFSSVYWFHHESGRYMVDSWDDRSTPPYVNNEAAGEK</sequence>
<evidence type="ECO:0000269" key="1">
    <source>
    </source>
</evidence>
<evidence type="ECO:0000305" key="2"/>
<evidence type="ECO:0007829" key="3">
    <source>
        <dbReference type="PDB" id="3LGK"/>
    </source>
</evidence>
<evidence type="ECO:0007829" key="4">
    <source>
        <dbReference type="PDB" id="8SU3"/>
    </source>
</evidence>
<evidence type="ECO:0007829" key="5">
    <source>
        <dbReference type="PDB" id="8SU4"/>
    </source>
</evidence>
<accession>Q9K499</accession>
<comment type="function">
    <text evidence="1">Catalyzes the cyclization of farnesyl diphosphate (FPP) to the sesquiterpene epi-isozizaene.</text>
</comment>
<comment type="catalytic activity">
    <reaction>
        <text>(2E,6E)-farnesyl diphosphate = (+)-epi-isozizaene + diphosphate</text>
        <dbReference type="Rhea" id="RHEA:25992"/>
        <dbReference type="ChEBI" id="CHEBI:33019"/>
        <dbReference type="ChEBI" id="CHEBI:51458"/>
        <dbReference type="ChEBI" id="CHEBI:175763"/>
        <dbReference type="EC" id="4.2.3.37"/>
    </reaction>
</comment>
<comment type="cofactor">
    <cofactor evidence="1">
        <name>Mg(2+)</name>
        <dbReference type="ChEBI" id="CHEBI:18420"/>
    </cofactor>
    <cofactor evidence="1">
        <name>Mn(2+)</name>
        <dbReference type="ChEBI" id="CHEBI:29035"/>
    </cofactor>
    <cofactor evidence="1">
        <name>Fe(3+)</name>
        <dbReference type="ChEBI" id="CHEBI:29034"/>
    </cofactor>
    <text evidence="1">Binds 3 Mg(2+) ions per subunit. Can also use Mn(2+) and Fe(3+) but less efficiently, and other divalent cations such as Zn(2+), Fe(2+), Co(2+), Cu(2+) and Ni(2+) are nearly completely inefficient as cofactors.</text>
</comment>
<comment type="biophysicochemical properties">
    <kinetics>
        <KM evidence="1">147 nM for FPP</KM>
    </kinetics>
</comment>
<comment type="pathway">
    <text>Sesquiterpene biosynthesis; epi-isozizaene biosynthesis.</text>
</comment>
<comment type="domain">
    <text>The Asp-Asp-Xaa-Xaa-Asp/Glu (DDXXD/E) motif is important for the catalytic activity, presumably through binding to Mg(2+).</text>
</comment>
<comment type="similarity">
    <text evidence="2">Belongs to the terpene synthase family.</text>
</comment>
<gene>
    <name type="primary">cyc1</name>
    <name type="ordered locus">SCO5222</name>
    <name type="ORF">SC7E4.19</name>
</gene>
<organism>
    <name type="scientific">Streptomyces coelicolor (strain ATCC BAA-471 / A3(2) / M145)</name>
    <dbReference type="NCBI Taxonomy" id="100226"/>
    <lineage>
        <taxon>Bacteria</taxon>
        <taxon>Bacillati</taxon>
        <taxon>Actinomycetota</taxon>
        <taxon>Actinomycetes</taxon>
        <taxon>Kitasatosporales</taxon>
        <taxon>Streptomycetaceae</taxon>
        <taxon>Streptomyces</taxon>
        <taxon>Streptomyces albidoflavus group</taxon>
    </lineage>
</organism>
<reference key="1">
    <citation type="journal article" date="2002" name="Nature">
        <title>Complete genome sequence of the model actinomycete Streptomyces coelicolor A3(2).</title>
        <authorList>
            <person name="Bentley S.D."/>
            <person name="Chater K.F."/>
            <person name="Cerdeno-Tarraga A.-M."/>
            <person name="Challis G.L."/>
            <person name="Thomson N.R."/>
            <person name="James K.D."/>
            <person name="Harris D.E."/>
            <person name="Quail M.A."/>
            <person name="Kieser H."/>
            <person name="Harper D."/>
            <person name="Bateman A."/>
            <person name="Brown S."/>
            <person name="Chandra G."/>
            <person name="Chen C.W."/>
            <person name="Collins M."/>
            <person name="Cronin A."/>
            <person name="Fraser A."/>
            <person name="Goble A."/>
            <person name="Hidalgo J."/>
            <person name="Hornsby T."/>
            <person name="Howarth S."/>
            <person name="Huang C.-H."/>
            <person name="Kieser T."/>
            <person name="Larke L."/>
            <person name="Murphy L.D."/>
            <person name="Oliver K."/>
            <person name="O'Neil S."/>
            <person name="Rabbinowitsch E."/>
            <person name="Rajandream M.A."/>
            <person name="Rutherford K.M."/>
            <person name="Rutter S."/>
            <person name="Seeger K."/>
            <person name="Saunders D."/>
            <person name="Sharp S."/>
            <person name="Squares R."/>
            <person name="Squares S."/>
            <person name="Taylor K."/>
            <person name="Warren T."/>
            <person name="Wietzorrek A."/>
            <person name="Woodward J.R."/>
            <person name="Barrell B.G."/>
            <person name="Parkhill J."/>
            <person name="Hopwood D.A."/>
        </authorList>
    </citation>
    <scope>NUCLEOTIDE SEQUENCE [LARGE SCALE GENOMIC DNA]</scope>
    <source>
        <strain>ATCC BAA-471 / A3(2) / M145</strain>
    </source>
</reference>
<reference key="2">
    <citation type="journal article" date="2006" name="J. Am. Chem. Soc.">
        <title>Genome mining in Streptomyces coelicolor. Molecular cloning and characterization of a new sesquiterpene synthase.</title>
        <authorList>
            <person name="Lin X."/>
            <person name="Hopson R."/>
            <person name="Cane D.E."/>
        </authorList>
    </citation>
    <scope>FUNCTION</scope>
    <scope>COFACTOR</scope>
    <scope>KINETIC PARAMETERS</scope>
    <scope>REACTION MECHANISM</scope>
    <scope>REACTION STEREOCHEMISTRY</scope>
    <source>
        <strain>ATCC BAA-471 / A3(2) / M145</strain>
    </source>
</reference>
<feature type="chain" id="PRO_0000247894" description="Epi-isozizaene synthase">
    <location>
        <begin position="1"/>
        <end position="361"/>
    </location>
</feature>
<feature type="short sequence motif" description="DDXXD motif">
    <location>
        <begin position="99"/>
        <end position="103"/>
    </location>
</feature>
<feature type="binding site">
    <location>
        <position position="99"/>
    </location>
    <ligand>
        <name>Mg(2+)</name>
        <dbReference type="ChEBI" id="CHEBI:18420"/>
        <label>1</label>
    </ligand>
</feature>
<feature type="binding site">
    <location>
        <position position="99"/>
    </location>
    <ligand>
        <name>Mg(2+)</name>
        <dbReference type="ChEBI" id="CHEBI:18420"/>
        <label>2</label>
    </ligand>
</feature>
<feature type="binding site">
    <location>
        <position position="103"/>
    </location>
    <ligand>
        <name>Mg(2+)</name>
        <dbReference type="ChEBI" id="CHEBI:18420"/>
        <label>1</label>
    </ligand>
</feature>
<feature type="binding site">
    <location>
        <position position="103"/>
    </location>
    <ligand>
        <name>Mg(2+)</name>
        <dbReference type="ChEBI" id="CHEBI:18420"/>
        <label>2</label>
    </ligand>
</feature>
<feature type="binding site">
    <location>
        <position position="240"/>
    </location>
    <ligand>
        <name>Mg(2+)</name>
        <dbReference type="ChEBI" id="CHEBI:18420"/>
        <label>3</label>
    </ligand>
</feature>
<feature type="binding site">
    <location>
        <position position="244"/>
    </location>
    <ligand>
        <name>Mg(2+)</name>
        <dbReference type="ChEBI" id="CHEBI:18420"/>
        <label>3</label>
    </ligand>
</feature>
<feature type="binding site">
    <location>
        <position position="248"/>
    </location>
    <ligand>
        <name>Mg(2+)</name>
        <dbReference type="ChEBI" id="CHEBI:18420"/>
        <label>3</label>
    </ligand>
</feature>
<feature type="turn" evidence="4">
    <location>
        <begin position="19"/>
        <end position="21"/>
    </location>
</feature>
<feature type="helix" evidence="4">
    <location>
        <begin position="24"/>
        <end position="29"/>
    </location>
</feature>
<feature type="helix" evidence="4">
    <location>
        <begin position="38"/>
        <end position="51"/>
    </location>
</feature>
<feature type="helix" evidence="4">
    <location>
        <begin position="57"/>
        <end position="67"/>
    </location>
</feature>
<feature type="helix" evidence="4">
    <location>
        <begin position="69"/>
        <end position="74"/>
    </location>
</feature>
<feature type="helix" evidence="4">
    <location>
        <begin position="82"/>
        <end position="107"/>
    </location>
</feature>
<feature type="helix" evidence="4">
    <location>
        <begin position="111"/>
        <end position="126"/>
    </location>
</feature>
<feature type="helix" evidence="4">
    <location>
        <begin position="128"/>
        <end position="131"/>
    </location>
</feature>
<feature type="helix" evidence="4">
    <location>
        <begin position="137"/>
        <end position="149"/>
    </location>
</feature>
<feature type="helix" evidence="4">
    <location>
        <begin position="155"/>
        <end position="181"/>
    </location>
</feature>
<feature type="helix" evidence="4">
    <location>
        <begin position="187"/>
        <end position="197"/>
    </location>
</feature>
<feature type="helix" evidence="4">
    <location>
        <begin position="200"/>
        <end position="211"/>
    </location>
</feature>
<feature type="helix" evidence="4">
    <location>
        <begin position="217"/>
        <end position="220"/>
    </location>
</feature>
<feature type="helix" evidence="4">
    <location>
        <begin position="223"/>
        <end position="250"/>
    </location>
</feature>
<feature type="strand" evidence="3">
    <location>
        <begin position="251"/>
        <end position="254"/>
    </location>
</feature>
<feature type="helix" evidence="4">
    <location>
        <begin position="257"/>
        <end position="265"/>
    </location>
</feature>
<feature type="helix" evidence="4">
    <location>
        <begin position="269"/>
        <end position="301"/>
    </location>
</feature>
<feature type="strand" evidence="5">
    <location>
        <begin position="303"/>
        <end position="305"/>
    </location>
</feature>
<feature type="helix" evidence="4">
    <location>
        <begin position="306"/>
        <end position="335"/>
    </location>
</feature>
<feature type="helix" evidence="4">
    <location>
        <begin position="337"/>
        <end position="339"/>
    </location>
</feature>
<feature type="helix" evidence="4">
    <location>
        <begin position="341"/>
        <end position="343"/>
    </location>
</feature>